<evidence type="ECO:0000255" key="1"/>
<evidence type="ECO:0000255" key="2">
    <source>
        <dbReference type="PROSITE-ProRule" id="PRU00068"/>
    </source>
</evidence>
<evidence type="ECO:0000269" key="3">
    <source>
    </source>
</evidence>
<evidence type="ECO:0000305" key="4"/>
<evidence type="ECO:0000305" key="5">
    <source>
    </source>
</evidence>
<comment type="function">
    <text evidence="3">Inhibits platelet aggregation induced by thrombin and arachidonic acid with IC(50) of 40 and 50 nM respectively (in rabbit platetelet-rich plasma). It also inhibits the adhesion of melanoma tumor cells on fibrinogen and fibronectin, by interfering with the function of alpha-V/beta-3 (ITGAV/ITGB3) and, to a lesser extent, with alpha-V/beta-6 (ITGAV/ITGB6) and alpha-5/beta-1 (ITGA5/ITGB1) integrins.</text>
</comment>
<comment type="subunit">
    <text evidence="3">Monomer.</text>
</comment>
<comment type="subcellular location">
    <subcellularLocation>
        <location>Secreted</location>
    </subcellularLocation>
</comment>
<comment type="tissue specificity">
    <text>Expressed by the venom gland.</text>
</comment>
<comment type="mass spectrometry" mass="25787.02" method="MALDI" evidence="3"/>
<comment type="miscellaneous">
    <text evidence="5">Negative results: does not interact with the alpha-2/beta-1 (ITGA2/ITGB1) integrin. Does not inhibit platelet aggregation induced by collagen or ADP (PubMed:19808093).</text>
</comment>
<comment type="miscellaneous">
    <text>The disintegrin domain belongs to the long disintegrin subfamily.</text>
</comment>
<comment type="similarity">
    <text evidence="4">Belongs to the venom metalloproteinase (M12B) family. P-III subfamily. P-IIIb sub-subfamily.</text>
</comment>
<comment type="caution">
    <text evidence="4">The complete sequence contains a signal peptide, a propeptide domain, and a proteinase domain at the N-terminus.</text>
</comment>
<reference key="1">
    <citation type="journal article" date="2010" name="Matrix Biol.">
        <title>Leberagin-C, a disintegrin-like/cysteine-rich protein from Macrovipera lebetina transmediterranea venom, inhibits alphavbeta3 integrin-mediated cell adhesion.</title>
        <authorList>
            <person name="Limam I."/>
            <person name="Bazaa A."/>
            <person name="Srairi-Abid N."/>
            <person name="Taboubi S."/>
            <person name="Jebali J."/>
            <person name="Zouari-Kessentini R."/>
            <person name="Kallech-Ziri O."/>
            <person name="Mejdoub H."/>
            <person name="Hammami A."/>
            <person name="El Ayeb M."/>
            <person name="Luis J."/>
            <person name="Marrakchi N."/>
        </authorList>
    </citation>
    <scope>NUCLEOTIDE SEQUENCE [MRNA]</scope>
    <scope>PROTEIN SEQUENCE OF 1-28; 135-185 AND 191-205</scope>
    <scope>FUNCTION</scope>
    <scope>SUBUNIT</scope>
    <scope>MASS SPECTROMETRY</scope>
    <source>
        <tissue>Venom</tissue>
        <tissue>Venom gland</tissue>
    </source>
</reference>
<protein>
    <recommendedName>
        <fullName>Disintegrin-like leberagin-C</fullName>
    </recommendedName>
</protein>
<name>VM3LC_MACLN</name>
<organism>
    <name type="scientific">Macrovipera lebetina transmediterranea</name>
    <name type="common">Blunt-nosed viper</name>
    <name type="synonym">Vipera lebetina transmediterranea</name>
    <dbReference type="NCBI Taxonomy" id="384075"/>
    <lineage>
        <taxon>Eukaryota</taxon>
        <taxon>Metazoa</taxon>
        <taxon>Chordata</taxon>
        <taxon>Craniata</taxon>
        <taxon>Vertebrata</taxon>
        <taxon>Euteleostomi</taxon>
        <taxon>Lepidosauria</taxon>
        <taxon>Squamata</taxon>
        <taxon>Bifurcata</taxon>
        <taxon>Unidentata</taxon>
        <taxon>Episquamata</taxon>
        <taxon>Toxicofera</taxon>
        <taxon>Serpentes</taxon>
        <taxon>Colubroidea</taxon>
        <taxon>Viperidae</taxon>
        <taxon>Viperinae</taxon>
        <taxon>Macrovipera</taxon>
        <taxon>Macrovipera lebetinus</taxon>
    </lineage>
</organism>
<accession>C0LZJ5</accession>
<keyword id="KW-1217">Cell adhesion impairing toxin</keyword>
<keyword id="KW-0903">Direct protein sequencing</keyword>
<keyword id="KW-1015">Disulfide bond</keyword>
<keyword id="KW-0325">Glycoprotein</keyword>
<keyword id="KW-1199">Hemostasis impairing toxin</keyword>
<keyword id="KW-1201">Platelet aggregation inhibiting toxin</keyword>
<keyword id="KW-0964">Secreted</keyword>
<keyword id="KW-0800">Toxin</keyword>
<feature type="chain" id="PRO_0000424622" description="Disintegrin-like leberagin-C">
    <location>
        <begin position="1"/>
        <end position="205"/>
    </location>
</feature>
<feature type="domain" description="Disintegrin" evidence="2">
    <location>
        <begin position="4"/>
        <end position="90"/>
    </location>
</feature>
<feature type="short sequence motif" description="D/ECD-tripeptide">
    <location>
        <begin position="68"/>
        <end position="70"/>
    </location>
</feature>
<feature type="glycosylation site" description="N-linked (GlcNAc...) asparagine" evidence="1">
    <location>
        <position position="120"/>
    </location>
</feature>
<feature type="disulfide bond" evidence="2">
    <location>
        <begin position="7"/>
        <end position="26"/>
    </location>
</feature>
<feature type="disulfide bond" evidence="2">
    <location>
        <begin position="18"/>
        <end position="36"/>
    </location>
</feature>
<feature type="disulfide bond" evidence="2">
    <location>
        <begin position="62"/>
        <end position="82"/>
    </location>
</feature>
<feature type="disulfide bond" evidence="2">
    <location>
        <begin position="69"/>
        <end position="94"/>
    </location>
</feature>
<feature type="disulfide bond" evidence="2">
    <location>
        <begin position="101"/>
        <end position="106"/>
    </location>
</feature>
<feature type="disulfide bond" evidence="2">
    <location>
        <begin position="113"/>
        <end position="128"/>
    </location>
</feature>
<feature type="disulfide bond" evidence="2">
    <location>
        <begin position="151"/>
        <end position="158"/>
    </location>
</feature>
<feature type="disulfide bond" evidence="2">
    <location>
        <begin position="163"/>
        <end position="171"/>
    </location>
</feature>
<feature type="disulfide bond" evidence="2">
    <location>
        <begin position="193"/>
        <end position="198"/>
    </location>
</feature>
<dbReference type="EMBL" id="FJ790318">
    <property type="protein sequence ID" value="ACN88545.1"/>
    <property type="molecule type" value="mRNA"/>
</dbReference>
<dbReference type="SMR" id="C0LZJ5"/>
<dbReference type="GO" id="GO:0005576">
    <property type="term" value="C:extracellular region"/>
    <property type="evidence" value="ECO:0007669"/>
    <property type="project" value="UniProtKB-SubCell"/>
</dbReference>
<dbReference type="GO" id="GO:0090729">
    <property type="term" value="F:toxin activity"/>
    <property type="evidence" value="ECO:0007669"/>
    <property type="project" value="UniProtKB-KW"/>
</dbReference>
<dbReference type="FunFam" id="4.10.70.10:FF:000001">
    <property type="entry name" value="Disintegrin and metalloproteinase domain-containing protein 22"/>
    <property type="match status" value="1"/>
</dbReference>
<dbReference type="Gene3D" id="3.40.1620.60">
    <property type="match status" value="1"/>
</dbReference>
<dbReference type="Gene3D" id="4.10.70.10">
    <property type="entry name" value="Disintegrin domain"/>
    <property type="match status" value="1"/>
</dbReference>
<dbReference type="InterPro" id="IPR006586">
    <property type="entry name" value="ADAM_Cys-rich"/>
</dbReference>
<dbReference type="InterPro" id="IPR018358">
    <property type="entry name" value="Disintegrin_CS"/>
</dbReference>
<dbReference type="InterPro" id="IPR001762">
    <property type="entry name" value="Disintegrin_dom"/>
</dbReference>
<dbReference type="InterPro" id="IPR036436">
    <property type="entry name" value="Disintegrin_dom_sf"/>
</dbReference>
<dbReference type="PANTHER" id="PTHR11905">
    <property type="entry name" value="ADAM A DISINTEGRIN AND METALLOPROTEASE DOMAIN"/>
    <property type="match status" value="1"/>
</dbReference>
<dbReference type="PANTHER" id="PTHR11905:SF159">
    <property type="entry name" value="ADAM METALLOPROTEASE"/>
    <property type="match status" value="1"/>
</dbReference>
<dbReference type="Pfam" id="PF08516">
    <property type="entry name" value="ADAM_CR"/>
    <property type="match status" value="1"/>
</dbReference>
<dbReference type="Pfam" id="PF00200">
    <property type="entry name" value="Disintegrin"/>
    <property type="match status" value="1"/>
</dbReference>
<dbReference type="PRINTS" id="PR00289">
    <property type="entry name" value="DISINTEGRIN"/>
</dbReference>
<dbReference type="SMART" id="SM00608">
    <property type="entry name" value="ACR"/>
    <property type="match status" value="1"/>
</dbReference>
<dbReference type="SMART" id="SM00050">
    <property type="entry name" value="DISIN"/>
    <property type="match status" value="1"/>
</dbReference>
<dbReference type="SUPFAM" id="SSF57552">
    <property type="entry name" value="Blood coagulation inhibitor (disintegrin)"/>
    <property type="match status" value="1"/>
</dbReference>
<dbReference type="PROSITE" id="PS00427">
    <property type="entry name" value="DISINTEGRIN_1"/>
    <property type="match status" value="1"/>
</dbReference>
<dbReference type="PROSITE" id="PS50214">
    <property type="entry name" value="DISINTEGRIN_2"/>
    <property type="match status" value="1"/>
</dbReference>
<proteinExistence type="evidence at protein level"/>
<sequence length="205" mass="22634">IVSPPVCGNELLENGEECDCGSPANCRNPCCDAASCRLHSWVECESGECCDQCRFVTAGTECRATRSECDLAGQCTGQSADCPIDRFHRNGQPCLQNYGYCYNGKCPIMHHQCYYLFGANATVAQDACFEENKNGIGDFYCRKQSDRLIPCAPEDVKCGRLFCEILPNTRCKHAPGDNGMVDPGTKCEDKKVCFNRKCVDVNTVY</sequence>